<feature type="chain" id="PRO_1000164086" description="Redox-sensing transcriptional repressor Rex">
    <location>
        <begin position="1"/>
        <end position="213"/>
    </location>
</feature>
<feature type="DNA-binding region" description="H-T-H motif" evidence="2">
    <location>
        <begin position="18"/>
        <end position="57"/>
    </location>
</feature>
<feature type="binding site" evidence="2">
    <location>
        <begin position="92"/>
        <end position="97"/>
    </location>
    <ligand>
        <name>NAD(+)</name>
        <dbReference type="ChEBI" id="CHEBI:57540"/>
    </ligand>
</feature>
<reference key="1">
    <citation type="journal article" date="2010" name="Genome Biol.">
        <title>Structure and dynamics of the pan-genome of Streptococcus pneumoniae and closely related species.</title>
        <authorList>
            <person name="Donati C."/>
            <person name="Hiller N.L."/>
            <person name="Tettelin H."/>
            <person name="Muzzi A."/>
            <person name="Croucher N.J."/>
            <person name="Angiuoli S.V."/>
            <person name="Oggioni M."/>
            <person name="Dunning Hotopp J.C."/>
            <person name="Hu F.Z."/>
            <person name="Riley D.R."/>
            <person name="Covacci A."/>
            <person name="Mitchell T.J."/>
            <person name="Bentley S.D."/>
            <person name="Kilian M."/>
            <person name="Ehrlich G.D."/>
            <person name="Rappuoli R."/>
            <person name="Moxon E.R."/>
            <person name="Masignani V."/>
        </authorList>
    </citation>
    <scope>NUCLEOTIDE SEQUENCE [LARGE SCALE GENOMIC DNA]</scope>
    <source>
        <strain>70585</strain>
    </source>
</reference>
<proteinExistence type="inferred from homology"/>
<organism>
    <name type="scientific">Streptococcus pneumoniae (strain 70585)</name>
    <dbReference type="NCBI Taxonomy" id="488221"/>
    <lineage>
        <taxon>Bacteria</taxon>
        <taxon>Bacillati</taxon>
        <taxon>Bacillota</taxon>
        <taxon>Bacilli</taxon>
        <taxon>Lactobacillales</taxon>
        <taxon>Streptococcaceae</taxon>
        <taxon>Streptococcus</taxon>
    </lineage>
</organism>
<accession>C1C787</accession>
<keyword id="KW-0963">Cytoplasm</keyword>
<keyword id="KW-0238">DNA-binding</keyword>
<keyword id="KW-0520">NAD</keyword>
<keyword id="KW-0678">Repressor</keyword>
<keyword id="KW-0804">Transcription</keyword>
<keyword id="KW-0805">Transcription regulation</keyword>
<protein>
    <recommendedName>
        <fullName evidence="2">Redox-sensing transcriptional repressor Rex</fullName>
    </recommendedName>
</protein>
<gene>
    <name evidence="2" type="primary">rex</name>
    <name type="ordered locus">SP70585_1164</name>
</gene>
<name>REX_STRP7</name>
<sequence>MKDKQFAIPKATAKRLSLYYRIFKRFHAEKIERANSKQIAEAIGIDSATVRRDFSYFGELGRRGFGYDVKKLMTFFADLLNDNSITNVMLVGIGNMGHALLHYRFHERNKMKIIMAFDLDDHPEVGTQTPDGIPIYGISQIKDKIKDADVKTAILTVPSVKSQEVANLLVDAGVKGILSFSPVHLHLPKDVVVQYVDLTSELQTLLYFMRKED</sequence>
<evidence type="ECO:0000250" key="1">
    <source>
        <dbReference type="UniProtKB" id="Q04KJ6"/>
    </source>
</evidence>
<evidence type="ECO:0000255" key="2">
    <source>
        <dbReference type="HAMAP-Rule" id="MF_01131"/>
    </source>
</evidence>
<dbReference type="EMBL" id="CP000918">
    <property type="protein sequence ID" value="ACO17074.1"/>
    <property type="molecule type" value="Genomic_DNA"/>
</dbReference>
<dbReference type="RefSeq" id="WP_000653403.1">
    <property type="nucleotide sequence ID" value="NC_012468.1"/>
</dbReference>
<dbReference type="SMR" id="C1C787"/>
<dbReference type="KEGG" id="snm:SP70585_1164"/>
<dbReference type="HOGENOM" id="CLU_061534_1_1_9"/>
<dbReference type="Proteomes" id="UP000002211">
    <property type="component" value="Chromosome"/>
</dbReference>
<dbReference type="GO" id="GO:0005737">
    <property type="term" value="C:cytoplasm"/>
    <property type="evidence" value="ECO:0007669"/>
    <property type="project" value="UniProtKB-SubCell"/>
</dbReference>
<dbReference type="GO" id="GO:0003677">
    <property type="term" value="F:DNA binding"/>
    <property type="evidence" value="ECO:0007669"/>
    <property type="project" value="UniProtKB-UniRule"/>
</dbReference>
<dbReference type="GO" id="GO:0003700">
    <property type="term" value="F:DNA-binding transcription factor activity"/>
    <property type="evidence" value="ECO:0007669"/>
    <property type="project" value="UniProtKB-UniRule"/>
</dbReference>
<dbReference type="GO" id="GO:0045892">
    <property type="term" value="P:negative regulation of DNA-templated transcription"/>
    <property type="evidence" value="ECO:0007669"/>
    <property type="project" value="InterPro"/>
</dbReference>
<dbReference type="GO" id="GO:0051775">
    <property type="term" value="P:response to redox state"/>
    <property type="evidence" value="ECO:0007669"/>
    <property type="project" value="InterPro"/>
</dbReference>
<dbReference type="Gene3D" id="3.40.50.720">
    <property type="entry name" value="NAD(P)-binding Rossmann-like Domain"/>
    <property type="match status" value="1"/>
</dbReference>
<dbReference type="Gene3D" id="1.10.10.10">
    <property type="entry name" value="Winged helix-like DNA-binding domain superfamily/Winged helix DNA-binding domain"/>
    <property type="match status" value="1"/>
</dbReference>
<dbReference type="HAMAP" id="MF_01131">
    <property type="entry name" value="Rex"/>
    <property type="match status" value="1"/>
</dbReference>
<dbReference type="InterPro" id="IPR003781">
    <property type="entry name" value="CoA-bd"/>
</dbReference>
<dbReference type="InterPro" id="IPR036291">
    <property type="entry name" value="NAD(P)-bd_dom_sf"/>
</dbReference>
<dbReference type="InterPro" id="IPR009718">
    <property type="entry name" value="Rex_DNA-bd_C_dom"/>
</dbReference>
<dbReference type="InterPro" id="IPR022876">
    <property type="entry name" value="Tscrpt_rep_Rex"/>
</dbReference>
<dbReference type="InterPro" id="IPR036388">
    <property type="entry name" value="WH-like_DNA-bd_sf"/>
</dbReference>
<dbReference type="InterPro" id="IPR036390">
    <property type="entry name" value="WH_DNA-bd_sf"/>
</dbReference>
<dbReference type="NCBIfam" id="NF003988">
    <property type="entry name" value="PRK05472.1-1"/>
    <property type="match status" value="1"/>
</dbReference>
<dbReference type="NCBIfam" id="NF003989">
    <property type="entry name" value="PRK05472.1-3"/>
    <property type="match status" value="1"/>
</dbReference>
<dbReference type="NCBIfam" id="NF003991">
    <property type="entry name" value="PRK05472.1-5"/>
    <property type="match status" value="1"/>
</dbReference>
<dbReference type="NCBIfam" id="NF003994">
    <property type="entry name" value="PRK05472.2-3"/>
    <property type="match status" value="1"/>
</dbReference>
<dbReference type="NCBIfam" id="NF003995">
    <property type="entry name" value="PRK05472.2-4"/>
    <property type="match status" value="1"/>
</dbReference>
<dbReference type="NCBIfam" id="NF003996">
    <property type="entry name" value="PRK05472.2-5"/>
    <property type="match status" value="1"/>
</dbReference>
<dbReference type="PANTHER" id="PTHR35786">
    <property type="entry name" value="REDOX-SENSING TRANSCRIPTIONAL REPRESSOR REX"/>
    <property type="match status" value="1"/>
</dbReference>
<dbReference type="PANTHER" id="PTHR35786:SF1">
    <property type="entry name" value="REDOX-SENSING TRANSCRIPTIONAL REPRESSOR REX 1"/>
    <property type="match status" value="1"/>
</dbReference>
<dbReference type="Pfam" id="PF02629">
    <property type="entry name" value="CoA_binding"/>
    <property type="match status" value="1"/>
</dbReference>
<dbReference type="Pfam" id="PF06971">
    <property type="entry name" value="Put_DNA-bind_N"/>
    <property type="match status" value="1"/>
</dbReference>
<dbReference type="SMART" id="SM00881">
    <property type="entry name" value="CoA_binding"/>
    <property type="match status" value="1"/>
</dbReference>
<dbReference type="SUPFAM" id="SSF51735">
    <property type="entry name" value="NAD(P)-binding Rossmann-fold domains"/>
    <property type="match status" value="1"/>
</dbReference>
<dbReference type="SUPFAM" id="SSF46785">
    <property type="entry name" value="Winged helix' DNA-binding domain"/>
    <property type="match status" value="1"/>
</dbReference>
<comment type="function">
    <text evidence="1 2">Modulates transcription in response to changes in cellular NADH/NAD(+) redox state (By similarity). Binds to the promoter of the aldehyde-alcohol dehydrogenase adhE gene. Functions as a redox-dependent repressor of adhE expression (By similarity).</text>
</comment>
<comment type="subunit">
    <text evidence="2">Homodimer.</text>
</comment>
<comment type="subcellular location">
    <subcellularLocation>
        <location evidence="2">Cytoplasm</location>
    </subcellularLocation>
</comment>
<comment type="similarity">
    <text evidence="2">Belongs to the transcriptional regulatory Rex family.</text>
</comment>